<gene>
    <name evidence="1" type="primary">rplO</name>
    <name type="ordered locus">Dgeo_1848</name>
</gene>
<comment type="function">
    <text evidence="1">Binds to the 23S rRNA.</text>
</comment>
<comment type="subunit">
    <text evidence="1">Part of the 50S ribosomal subunit.</text>
</comment>
<comment type="similarity">
    <text evidence="1">Belongs to the universal ribosomal protein uL15 family.</text>
</comment>
<reference key="1">
    <citation type="submission" date="2006-04" db="EMBL/GenBank/DDBJ databases">
        <title>Complete sequence of chromosome of Deinococcus geothermalis DSM 11300.</title>
        <authorList>
            <person name="Copeland A."/>
            <person name="Lucas S."/>
            <person name="Lapidus A."/>
            <person name="Barry K."/>
            <person name="Detter J.C."/>
            <person name="Glavina del Rio T."/>
            <person name="Hammon N."/>
            <person name="Israni S."/>
            <person name="Dalin E."/>
            <person name="Tice H."/>
            <person name="Pitluck S."/>
            <person name="Brettin T."/>
            <person name="Bruce D."/>
            <person name="Han C."/>
            <person name="Tapia R."/>
            <person name="Saunders E."/>
            <person name="Gilna P."/>
            <person name="Schmutz J."/>
            <person name="Larimer F."/>
            <person name="Land M."/>
            <person name="Hauser L."/>
            <person name="Kyrpides N."/>
            <person name="Kim E."/>
            <person name="Daly M.J."/>
            <person name="Fredrickson J.K."/>
            <person name="Makarova K.S."/>
            <person name="Gaidamakova E.K."/>
            <person name="Zhai M."/>
            <person name="Richardson P."/>
        </authorList>
    </citation>
    <scope>NUCLEOTIDE SEQUENCE [LARGE SCALE GENOMIC DNA]</scope>
    <source>
        <strain>DSM 11300 / CIP 105573 / AG-3a</strain>
    </source>
</reference>
<organism>
    <name type="scientific">Deinococcus geothermalis (strain DSM 11300 / CIP 105573 / AG-3a)</name>
    <dbReference type="NCBI Taxonomy" id="319795"/>
    <lineage>
        <taxon>Bacteria</taxon>
        <taxon>Thermotogati</taxon>
        <taxon>Deinococcota</taxon>
        <taxon>Deinococci</taxon>
        <taxon>Deinococcales</taxon>
        <taxon>Deinococcaceae</taxon>
        <taxon>Deinococcus</taxon>
    </lineage>
</organism>
<accession>Q1IX91</accession>
<evidence type="ECO:0000255" key="1">
    <source>
        <dbReference type="HAMAP-Rule" id="MF_01341"/>
    </source>
</evidence>
<evidence type="ECO:0000256" key="2">
    <source>
        <dbReference type="SAM" id="MobiDB-lite"/>
    </source>
</evidence>
<evidence type="ECO:0000305" key="3"/>
<feature type="chain" id="PRO_0000251505" description="Large ribosomal subunit protein uL15">
    <location>
        <begin position="1"/>
        <end position="154"/>
    </location>
</feature>
<feature type="region of interest" description="Disordered" evidence="2">
    <location>
        <begin position="1"/>
        <end position="54"/>
    </location>
</feature>
<protein>
    <recommendedName>
        <fullName evidence="1">Large ribosomal subunit protein uL15</fullName>
    </recommendedName>
    <alternativeName>
        <fullName evidence="3">50S ribosomal protein L15</fullName>
    </alternativeName>
</protein>
<proteinExistence type="inferred from homology"/>
<keyword id="KW-0687">Ribonucleoprotein</keyword>
<keyword id="KW-0689">Ribosomal protein</keyword>
<keyword id="KW-0694">RNA-binding</keyword>
<keyword id="KW-0699">rRNA-binding</keyword>
<dbReference type="EMBL" id="CP000359">
    <property type="protein sequence ID" value="ABF46143.1"/>
    <property type="molecule type" value="Genomic_DNA"/>
</dbReference>
<dbReference type="RefSeq" id="WP_011530973.1">
    <property type="nucleotide sequence ID" value="NC_008025.1"/>
</dbReference>
<dbReference type="SMR" id="Q1IX91"/>
<dbReference type="STRING" id="319795.Dgeo_1848"/>
<dbReference type="KEGG" id="dge:Dgeo_1848"/>
<dbReference type="eggNOG" id="COG0200">
    <property type="taxonomic scope" value="Bacteria"/>
</dbReference>
<dbReference type="HOGENOM" id="CLU_055188_4_0_0"/>
<dbReference type="Proteomes" id="UP000002431">
    <property type="component" value="Chromosome"/>
</dbReference>
<dbReference type="GO" id="GO:0022625">
    <property type="term" value="C:cytosolic large ribosomal subunit"/>
    <property type="evidence" value="ECO:0007669"/>
    <property type="project" value="TreeGrafter"/>
</dbReference>
<dbReference type="GO" id="GO:0019843">
    <property type="term" value="F:rRNA binding"/>
    <property type="evidence" value="ECO:0007669"/>
    <property type="project" value="UniProtKB-UniRule"/>
</dbReference>
<dbReference type="GO" id="GO:0003735">
    <property type="term" value="F:structural constituent of ribosome"/>
    <property type="evidence" value="ECO:0007669"/>
    <property type="project" value="InterPro"/>
</dbReference>
<dbReference type="GO" id="GO:0006412">
    <property type="term" value="P:translation"/>
    <property type="evidence" value="ECO:0007669"/>
    <property type="project" value="UniProtKB-UniRule"/>
</dbReference>
<dbReference type="Gene3D" id="3.100.10.10">
    <property type="match status" value="1"/>
</dbReference>
<dbReference type="HAMAP" id="MF_01341">
    <property type="entry name" value="Ribosomal_uL15"/>
    <property type="match status" value="1"/>
</dbReference>
<dbReference type="InterPro" id="IPR030878">
    <property type="entry name" value="Ribosomal_uL15"/>
</dbReference>
<dbReference type="InterPro" id="IPR021131">
    <property type="entry name" value="Ribosomal_uL15/eL18"/>
</dbReference>
<dbReference type="InterPro" id="IPR036227">
    <property type="entry name" value="Ribosomal_uL15/eL18_sf"/>
</dbReference>
<dbReference type="InterPro" id="IPR005749">
    <property type="entry name" value="Ribosomal_uL15_bac-type"/>
</dbReference>
<dbReference type="InterPro" id="IPR001196">
    <property type="entry name" value="Ribosomal_uL15_CS"/>
</dbReference>
<dbReference type="NCBIfam" id="TIGR01071">
    <property type="entry name" value="rplO_bact"/>
    <property type="match status" value="1"/>
</dbReference>
<dbReference type="PANTHER" id="PTHR12934">
    <property type="entry name" value="50S RIBOSOMAL PROTEIN L15"/>
    <property type="match status" value="1"/>
</dbReference>
<dbReference type="PANTHER" id="PTHR12934:SF11">
    <property type="entry name" value="LARGE RIBOSOMAL SUBUNIT PROTEIN UL15M"/>
    <property type="match status" value="1"/>
</dbReference>
<dbReference type="Pfam" id="PF00828">
    <property type="entry name" value="Ribosomal_L27A"/>
    <property type="match status" value="1"/>
</dbReference>
<dbReference type="SUPFAM" id="SSF52080">
    <property type="entry name" value="Ribosomal proteins L15p and L18e"/>
    <property type="match status" value="1"/>
</dbReference>
<dbReference type="PROSITE" id="PS00475">
    <property type="entry name" value="RIBOSOMAL_L15"/>
    <property type="match status" value="1"/>
</dbReference>
<sequence>MKLHDLTPAPGSRKPKKRVGRGPGGTDKTAGRGHKGQKSRSGAGKGPFFEGGRSTLISRLPKRGFNNVGTTYEVVNLAQLARVEGDTLDRTALERAGLVRRKDRPVKLLARGQVTRAVTVQVDAASEAAIRAVEAAGGRVVVTGADRQNAEQAG</sequence>
<name>RL15_DEIGD</name>